<comment type="function">
    <text evidence="3">One of the extrinsic, lumenal subunits of photosystem II (PSII), which stabilize and protect the oxygen-evolving complex. PSII is a light-driven water plastoquinone oxidoreductase, using light energy to abstract electrons from H(2)O, generating a proton gradient subsequently used for ATP formation. Required for dimerization of PSII and for binding of PsbQ to PSII (PubMed:24550459).</text>
</comment>
<comment type="subunit">
    <text evidence="1 3 5">PSII is composed of 1 copy each of membrane proteins PsbA, PsbB, PsbC, PsbD, PsbE, PsbF, PsbH, PsbI, PsbJ, PsbK, PsbL, PsbM, PsbT, PsbX, PsbY, PsbZ, Psb30/Ycf12, peripheral proteins PsbO, CyanoQ (PsbQ), PsbU, PsbV and a large number of cofactors. It forms dimeric complexes (PubMed:34937700). Contacts PsbQ (PubMed:24550459).</text>
</comment>
<comment type="subcellular location">
    <subcellularLocation>
        <location evidence="1 5">Cellular thylakoid membrane</location>
        <topology evidence="5">Peripheral membrane protein</topology>
        <orientation>Lumenal side</orientation>
    </subcellularLocation>
    <text evidence="5">CyanoQ (PsbQ) binds to the large lumenal domain of PsbC (CP43) between PsbO and PsbV.</text>
</comment>
<comment type="disruption phenotype">
    <text evidence="2 3 4">No photoautotrophic growth, no oxygen evolution (PubMed:3138527). Decreased growth rate at 30 degrees Celsius with 25 umol photons/m(2)/s, no growth in Ca(2+) depleted medium, decreased growth in Cl(-) depleted medium; further decreased in a double psbO-psbQ mutant (PubMed:15641809). No dimeric PSII forms, PsbQ does not associate with PSII (PubMed:24550459).</text>
</comment>
<comment type="similarity">
    <text evidence="9">Belongs to the PsbO family.</text>
</comment>
<feature type="signal peptide" evidence="1 6">
    <location>
        <begin position="1"/>
        <end position="28"/>
    </location>
</feature>
<feature type="chain" id="PRO_0000029570" description="Photosystem II extrinsic protein O">
    <location>
        <begin position="29"/>
        <end position="274"/>
    </location>
</feature>
<feature type="helix" evidence="12">
    <location>
        <begin position="36"/>
        <end position="39"/>
    </location>
</feature>
<feature type="turn" evidence="12">
    <location>
        <begin position="40"/>
        <end position="42"/>
    </location>
</feature>
<feature type="helix" evidence="12">
    <location>
        <begin position="44"/>
        <end position="46"/>
    </location>
</feature>
<feature type="strand" evidence="12">
    <location>
        <begin position="66"/>
        <end position="82"/>
    </location>
</feature>
<feature type="strand" evidence="12">
    <location>
        <begin position="86"/>
        <end position="90"/>
    </location>
</feature>
<feature type="strand" evidence="12">
    <location>
        <begin position="94"/>
        <end position="96"/>
    </location>
</feature>
<feature type="strand" evidence="13">
    <location>
        <begin position="98"/>
        <end position="101"/>
    </location>
</feature>
<feature type="strand" evidence="12">
    <location>
        <begin position="107"/>
        <end position="116"/>
    </location>
</feature>
<feature type="strand" evidence="12">
    <location>
        <begin position="118"/>
        <end position="120"/>
    </location>
</feature>
<feature type="strand" evidence="12">
    <location>
        <begin position="122"/>
        <end position="130"/>
    </location>
</feature>
<feature type="strand" evidence="12">
    <location>
        <begin position="132"/>
        <end position="138"/>
    </location>
</feature>
<feature type="strand" evidence="12">
    <location>
        <begin position="144"/>
        <end position="150"/>
    </location>
</feature>
<feature type="strand" evidence="12">
    <location>
        <begin position="155"/>
        <end position="157"/>
    </location>
</feature>
<feature type="strand" evidence="12">
    <location>
        <begin position="163"/>
        <end position="165"/>
    </location>
</feature>
<feature type="strand" evidence="12">
    <location>
        <begin position="170"/>
        <end position="177"/>
    </location>
</feature>
<feature type="strand" evidence="12">
    <location>
        <begin position="193"/>
        <end position="199"/>
    </location>
</feature>
<feature type="helix" evidence="12">
    <location>
        <begin position="204"/>
        <end position="209"/>
    </location>
</feature>
<feature type="helix" evidence="12">
    <location>
        <begin position="211"/>
        <end position="213"/>
    </location>
</feature>
<feature type="strand" evidence="12">
    <location>
        <begin position="220"/>
        <end position="232"/>
    </location>
</feature>
<feature type="turn" evidence="12">
    <location>
        <begin position="233"/>
        <end position="236"/>
    </location>
</feature>
<feature type="strand" evidence="12">
    <location>
        <begin position="237"/>
        <end position="247"/>
    </location>
</feature>
<feature type="turn" evidence="12">
    <location>
        <begin position="251"/>
        <end position="254"/>
    </location>
</feature>
<feature type="strand" evidence="12">
    <location>
        <begin position="259"/>
        <end position="270"/>
    </location>
</feature>
<organism>
    <name type="scientific">Synechocystis sp. (strain ATCC 27184 / PCC 6803 / Kazusa)</name>
    <dbReference type="NCBI Taxonomy" id="1111708"/>
    <lineage>
        <taxon>Bacteria</taxon>
        <taxon>Bacillati</taxon>
        <taxon>Cyanobacteriota</taxon>
        <taxon>Cyanophyceae</taxon>
        <taxon>Synechococcales</taxon>
        <taxon>Merismopediaceae</taxon>
        <taxon>Synechocystis</taxon>
    </lineage>
</organism>
<keyword id="KW-0002">3D-structure</keyword>
<keyword id="KW-0903">Direct protein sequencing</keyword>
<keyword id="KW-0464">Manganese</keyword>
<keyword id="KW-0472">Membrane</keyword>
<keyword id="KW-0602">Photosynthesis</keyword>
<keyword id="KW-0604">Photosystem II</keyword>
<keyword id="KW-1185">Reference proteome</keyword>
<keyword id="KW-0732">Signal</keyword>
<keyword id="KW-0793">Thylakoid</keyword>
<name>PSBO_SYNY3</name>
<gene>
    <name evidence="7" type="primary">psbO</name>
    <name evidence="8" type="synonym">psb1</name>
    <name type="ordered locus">sll0427</name>
</gene>
<sequence length="274" mass="29912">MRFRPSIVALLSVCFGLLTFLYSGSAFAVDKSQLTYDDIVNTGLANVCPEISSFTRGTIEVEPNTKYFVSDFCMEPQEYFVKEEPVNKRQKAEYVKGKVLTRQTTSLEQIRGSIAVGADGTLTFKEKDGIDFQPITVLLPGGEEVPFFFTVKNFTGTTEPGFTSINSSTDFVGDFNVPSYRGAGFLDPKARGLYTGYDNAVALPSAADKFRTNKKETPLGKGTLSLQVTQVDGSTGEIAGIFESEQPSDTDLGAKEPLDVKVRGIFYGRVDTDV</sequence>
<protein>
    <recommendedName>
        <fullName>Photosystem II extrinsic protein O</fullName>
        <shortName>PsbO</shortName>
    </recommendedName>
    <alternativeName>
        <fullName evidence="8">Photosystem II manganese-stabilizing polypeptide</fullName>
        <shortName>MSP</shortName>
    </alternativeName>
</protein>
<reference key="1">
    <citation type="journal article" date="1988" name="Mol. Gen. Genet.">
        <title>Cloning, nucleotide sequence and mutational analysis of the gene encoding the Photosystem II manganese-stabilizing polypeptide of Synechocystis 6803.</title>
        <authorList>
            <person name="Philbrick J.B."/>
            <person name="Zilinskas B.A."/>
        </authorList>
    </citation>
    <scope>NUCLEOTIDE SEQUENCE [GENOMIC DNA]</scope>
    <scope>DISRUPTION PHENOTYPE</scope>
    <source>
        <strain>ATCC 27184 / PCC 6803 / Kazusa</strain>
    </source>
</reference>
<reference key="2">
    <citation type="journal article" date="1996" name="DNA Res.">
        <title>Sequence analysis of the genome of the unicellular cyanobacterium Synechocystis sp. strain PCC6803. II. Sequence determination of the entire genome and assignment of potential protein-coding regions.</title>
        <authorList>
            <person name="Kaneko T."/>
            <person name="Sato S."/>
            <person name="Kotani H."/>
            <person name="Tanaka A."/>
            <person name="Asamizu E."/>
            <person name="Nakamura Y."/>
            <person name="Miyajima N."/>
            <person name="Hirosawa M."/>
            <person name="Sugiura M."/>
            <person name="Sasamoto S."/>
            <person name="Kimura T."/>
            <person name="Hosouchi T."/>
            <person name="Matsuno A."/>
            <person name="Muraki A."/>
            <person name="Nakazaki N."/>
            <person name="Naruo K."/>
            <person name="Okumura S."/>
            <person name="Shimpo S."/>
            <person name="Takeuchi C."/>
            <person name="Wada T."/>
            <person name="Watanabe A."/>
            <person name="Yamada M."/>
            <person name="Yasuda M."/>
            <person name="Tabata S."/>
        </authorList>
    </citation>
    <scope>NUCLEOTIDE SEQUENCE [LARGE SCALE GENOMIC DNA]</scope>
    <source>
        <strain>ATCC 27184 / PCC 6803 / Kazusa</strain>
    </source>
</reference>
<reference key="3">
    <citation type="journal article" date="2002" name="Biochemistry">
        <title>Proteomic analysis of a highly active photosystem II preparation from the cyanobacterium Synechocystis sp. PCC 6803 reveals the presence of novel polypeptides.</title>
        <authorList>
            <person name="Kashino Y."/>
            <person name="Lauber W.M."/>
            <person name="Carroll J.A."/>
            <person name="Wang Q."/>
            <person name="Whitmarsh J."/>
            <person name="Satoh K."/>
            <person name="Pakrasi H.B."/>
        </authorList>
    </citation>
    <scope>PROTEIN SEQUENCE OF 29-39</scope>
    <scope>IDENTIFICATION BY MASS SPECTROMETRY</scope>
    <scope>SUBUNIT</scope>
    <scope>SUBCELLULAR LOCATION</scope>
    <source>
        <strain>ATCC 27184 / PCC 6803 / Kazusa</strain>
    </source>
</reference>
<reference key="4">
    <citation type="journal article" date="1997" name="Electrophoresis">
        <title>Towards a proteome project of cyanobacterium Synechocystis sp. strain PCC6803: linking 130 protein spots with their respective genes.</title>
        <authorList>
            <person name="Sazuka T."/>
            <person name="Ohara O."/>
        </authorList>
    </citation>
    <scope>PROTEIN SEQUENCE OF 29-37</scope>
    <source>
        <strain>ATCC 27184 / PCC 6803 / Kazusa</strain>
    </source>
</reference>
<reference key="5">
    <citation type="journal article" date="2014" name="Proc. Natl. Acad. Sci. U.S.A.">
        <title>MS-based cross-linking analysis reveals the location of the PsbQ protein in cyanobacterial photosystem II.</title>
        <authorList>
            <person name="Liu H."/>
            <person name="Zhang H."/>
            <person name="Weisz D.A."/>
            <person name="Vidavsky I."/>
            <person name="Gross M.L."/>
            <person name="Pakrasi H.B."/>
        </authorList>
    </citation>
    <scope>PROTEIN SEQUENCE OF 192-211</scope>
    <scope>FUNCTION</scope>
    <scope>DISRUPTION PHENOTYPE</scope>
    <source>
        <strain>ATCC 27184 / PCC 6803 / Kazusa</strain>
    </source>
</reference>
<reference key="6">
    <citation type="journal article" date="2005" name="Biochemistry">
        <title>PsbQ (Sll1638) in Synechocystis sp. PCC 6803 is required for photosystem II activity in specific mutants and in nutrient-limiting conditions.</title>
        <authorList>
            <person name="Summerfield T.C."/>
            <person name="Shand J.A."/>
            <person name="Bentley F.K."/>
            <person name="Eaton-Rye J.J."/>
        </authorList>
    </citation>
    <scope>DISRUPTION PHENOTYPE</scope>
    <source>
        <strain>ATCC 27184 / PCC 6803 / Kazusa</strain>
    </source>
</reference>
<reference evidence="10 11" key="7">
    <citation type="journal article" date="2022" name="Proc. Natl. Acad. Sci. U.S.A.">
        <title>High-resolution cryo-electron microscopy structure of photosystem II from the mesophilic cyanobacterium, Synechocystis sp. PCC 6803.</title>
        <authorList>
            <person name="Gisriel C.J."/>
            <person name="Wang J."/>
            <person name="Liu J."/>
            <person name="Flesher D.A."/>
            <person name="Reiss K.M."/>
            <person name="Huang H.L."/>
            <person name="Yang K.R."/>
            <person name="Armstrong W.H."/>
            <person name="Gunner M.R."/>
            <person name="Batista V.S."/>
            <person name="Debus R.J."/>
            <person name="Brudvig G.W."/>
        </authorList>
    </citation>
    <scope>STRUCTURE BY ELECTRON MICROSCOPY (1.93 ANGSTROMS) OF 31-273</scope>
    <scope>FUNCTION</scope>
    <scope>SUBUNIT</scope>
    <scope>SUBCELLULAR LOCATION</scope>
    <source>
        <strain>ATCC 27184 / PCC 6803 / Kazusa</strain>
    </source>
</reference>
<dbReference type="EMBL" id="X07986">
    <property type="protein sequence ID" value="CAA30796.1"/>
    <property type="molecule type" value="Genomic_DNA"/>
</dbReference>
<dbReference type="EMBL" id="BA000022">
    <property type="protein sequence ID" value="BAA18474.1"/>
    <property type="molecule type" value="Genomic_DNA"/>
</dbReference>
<dbReference type="PIR" id="S01261">
    <property type="entry name" value="S01261"/>
</dbReference>
<dbReference type="PDB" id="7N8O">
    <property type="method" value="EM"/>
    <property type="resolution" value="1.93 A"/>
    <property type="chains" value="O/o=31-273"/>
</dbReference>
<dbReference type="PDB" id="7RCV">
    <property type="method" value="EM"/>
    <property type="resolution" value="2.01 A"/>
    <property type="chains" value="O/o=31-273"/>
</dbReference>
<dbReference type="PDB" id="8TOW">
    <property type="method" value="EM"/>
    <property type="resolution" value="2.14 A"/>
    <property type="chains" value="O/o=1-274"/>
</dbReference>
<dbReference type="PDB" id="9EH5">
    <property type="method" value="EM"/>
    <property type="resolution" value="1.97 A"/>
    <property type="chains" value="O/o=1-274"/>
</dbReference>
<dbReference type="PDBsum" id="7N8O"/>
<dbReference type="PDBsum" id="7RCV"/>
<dbReference type="PDBsum" id="8TOW"/>
<dbReference type="PDBsum" id="9EH5"/>
<dbReference type="EMDB" id="EMD-24239"/>
<dbReference type="EMDB" id="EMD-24407"/>
<dbReference type="EMDB" id="EMD-41460"/>
<dbReference type="EMDB" id="EMD-48046"/>
<dbReference type="SMR" id="P10549"/>
<dbReference type="IntAct" id="P10549">
    <property type="interactions" value="6"/>
</dbReference>
<dbReference type="STRING" id="1148.gene:10499353"/>
<dbReference type="PaxDb" id="1148-1653561"/>
<dbReference type="EnsemblBacteria" id="BAA18474">
    <property type="protein sequence ID" value="BAA18474"/>
    <property type="gene ID" value="BAA18474"/>
</dbReference>
<dbReference type="KEGG" id="syn:sll0427"/>
<dbReference type="eggNOG" id="ENOG502Z7ZP">
    <property type="taxonomic scope" value="Bacteria"/>
</dbReference>
<dbReference type="InParanoid" id="P10549"/>
<dbReference type="PhylomeDB" id="P10549"/>
<dbReference type="BioCyc" id="MetaCyc:PSBO-MONOMER"/>
<dbReference type="Proteomes" id="UP000001425">
    <property type="component" value="Chromosome"/>
</dbReference>
<dbReference type="GO" id="GO:0009654">
    <property type="term" value="C:photosystem II oxygen evolving complex"/>
    <property type="evidence" value="ECO:0007669"/>
    <property type="project" value="InterPro"/>
</dbReference>
<dbReference type="GO" id="GO:0031676">
    <property type="term" value="C:plasma membrane-derived thylakoid membrane"/>
    <property type="evidence" value="ECO:0007669"/>
    <property type="project" value="UniProtKB-SubCell"/>
</dbReference>
<dbReference type="GO" id="GO:0030096">
    <property type="term" value="C:plasma membrane-derived thylakoid photosystem II"/>
    <property type="evidence" value="ECO:0000314"/>
    <property type="project" value="UniProtKB"/>
</dbReference>
<dbReference type="GO" id="GO:0010242">
    <property type="term" value="F:oxygen evolving activity"/>
    <property type="evidence" value="ECO:0007669"/>
    <property type="project" value="InterPro"/>
</dbReference>
<dbReference type="GO" id="GO:0010207">
    <property type="term" value="P:photosystem II assembly"/>
    <property type="evidence" value="ECO:0007669"/>
    <property type="project" value="InterPro"/>
</dbReference>
<dbReference type="GO" id="GO:0042549">
    <property type="term" value="P:photosystem II stabilization"/>
    <property type="evidence" value="ECO:0007669"/>
    <property type="project" value="InterPro"/>
</dbReference>
<dbReference type="Gene3D" id="3.30.2050.10">
    <property type="entry name" value="photosynthetic oxygen evolving center domain"/>
    <property type="match status" value="1"/>
</dbReference>
<dbReference type="Gene3D" id="2.40.160.30">
    <property type="entry name" value="Photosystem II, cytochrome c-550 precursor"/>
    <property type="match status" value="1"/>
</dbReference>
<dbReference type="InterPro" id="IPR011250">
    <property type="entry name" value="OMP/PagP_b-brl"/>
</dbReference>
<dbReference type="InterPro" id="IPR002628">
    <property type="entry name" value="PsbO"/>
</dbReference>
<dbReference type="PANTHER" id="PTHR34058">
    <property type="entry name" value="OXYGEN-EVOLVING ENHANCER PROTEIN 1-2, CHLOROPLASTIC"/>
    <property type="match status" value="1"/>
</dbReference>
<dbReference type="Pfam" id="PF01716">
    <property type="entry name" value="MSP"/>
    <property type="match status" value="1"/>
</dbReference>
<dbReference type="SUPFAM" id="SSF56925">
    <property type="entry name" value="OMPA-like"/>
    <property type="match status" value="1"/>
</dbReference>
<proteinExistence type="evidence at protein level"/>
<evidence type="ECO:0000269" key="1">
    <source>
    </source>
</evidence>
<evidence type="ECO:0000269" key="2">
    <source>
    </source>
</evidence>
<evidence type="ECO:0000269" key="3">
    <source>
    </source>
</evidence>
<evidence type="ECO:0000269" key="4">
    <source>
    </source>
</evidence>
<evidence type="ECO:0000269" key="5">
    <source>
    </source>
</evidence>
<evidence type="ECO:0000269" key="6">
    <source>
    </source>
</evidence>
<evidence type="ECO:0000303" key="7">
    <source>
    </source>
</evidence>
<evidence type="ECO:0000303" key="8">
    <source>
    </source>
</evidence>
<evidence type="ECO:0000305" key="9"/>
<evidence type="ECO:0007744" key="10">
    <source>
        <dbReference type="PDB" id="7N8O"/>
    </source>
</evidence>
<evidence type="ECO:0007744" key="11">
    <source>
        <dbReference type="PDB" id="7RCV"/>
    </source>
</evidence>
<evidence type="ECO:0007829" key="12">
    <source>
        <dbReference type="PDB" id="7N8O"/>
    </source>
</evidence>
<evidence type="ECO:0007829" key="13">
    <source>
        <dbReference type="PDB" id="7RCV"/>
    </source>
</evidence>
<accession>P10549</accession>